<gene>
    <name type="primary">VIK1</name>
    <name type="ordered locus">YPL253C</name>
</gene>
<evidence type="ECO:0000255" key="1"/>
<evidence type="ECO:0000256" key="2">
    <source>
        <dbReference type="SAM" id="MobiDB-lite"/>
    </source>
</evidence>
<evidence type="ECO:0000269" key="3">
    <source>
    </source>
</evidence>
<evidence type="ECO:0000269" key="4">
    <source>
    </source>
</evidence>
<evidence type="ECO:0000269" key="5">
    <source>
    </source>
</evidence>
<evidence type="ECO:0000269" key="6">
    <source>
    </source>
</evidence>
<evidence type="ECO:0000269" key="7">
    <source>
    </source>
</evidence>
<evidence type="ECO:0007744" key="8">
    <source>
        <dbReference type="PDB" id="2O0A"/>
    </source>
</evidence>
<evidence type="ECO:0007744" key="9">
    <source>
        <dbReference type="PDB" id="4ETP"/>
    </source>
</evidence>
<evidence type="ECO:0007829" key="10">
    <source>
        <dbReference type="PDB" id="2O0A"/>
    </source>
</evidence>
<evidence type="ECO:0007829" key="11">
    <source>
        <dbReference type="PDB" id="4ETP"/>
    </source>
</evidence>
<name>VIK1_YEAST</name>
<accession>Q12045</accession>
<accession>D6W3B8</accession>
<accession>Q7LGU6</accession>
<sequence length="647" mass="75730">MASQQNKHAFLSKNRIFHNPDNVSSSKSRNLMDITNTTNTMNGSRPSSMKSSLALPPVKDSFPSVSRSASLNINMSKIKDLKDRQDKIRFQRHTLRTQLIECEREIKTIKFRDLNKSRFELYKKKSKQAKYLKQVRDLTQNLNSKDGERADLIKKNKSALATLQAELDQNLILKRQESQELYNNKLIFWENELQIMENVEPDHEITEEISQLKKTLQELNINWANLQKQNLERQVNHESQLRKDFIAFKEAKLKSMENLTNKHRELLDQIATLQSESEKLHKEIMDIDRQAEYSEQNISEINENIKQLELANNPLISKSLQNSQDLEHLQNQMENLKEMASKQEKFYNDTYNTVEKELLRSRRLENSIIEQKGTMRCYAYVMEQNLPENLLFDYENGVITQGLSEHVYKFNRVIPHLKVSEDKFFTQEYSVYHDMCLNQKKNFNLISLSTTPHGSLRESLIKFLAEKDTIYQKQYVITLQFVFLSDDEFSQDMLLDYSHNDKDSIKLKFEKHSISLDSKLVIIENGLEDLPLNFSCDEHPNLPHSGMGIIKVQFFPRDSKSDGNNDPVPVDFYFIELNNLKSIEQFDKSIFKKESCETPIALVLKKLISDTKSFFLLNLNDSKNVNKLLTISEEVQTQLCKRKKKLT</sequence>
<comment type="function">
    <text evidence="3 4 5 6 7">Together with the minus end-directed microtubule motor KAR3, plays a role in microtubule organization (PubMed:17382884, PubMed:22734002, PubMed:25313961). Recruits KAR3 to microtubules, and together they may stabilize the polymers (PubMed:17382884, PubMed:25313961). The KAR3-VIK1 heterodimer cross-links anti-parallel microtubules (PubMed:17382884, PubMed:22734002). Targets and/or maintains KAR3 at the spindle pole body during vegetative growth (PubMed:10087265, PubMed:11729143).</text>
</comment>
<comment type="subunit">
    <text evidence="3 5">Interacts with KAR3; the interaction is direct.</text>
</comment>
<comment type="interaction">
    <interactant intactId="EBI-38784">
        <id>Q12045</id>
    </interactant>
    <interactant intactId="EBI-9499">
        <id>P17119</id>
        <label>KAR3</label>
    </interactant>
    <organismsDiffer>false</organismsDiffer>
    <experiments>4</experiments>
</comment>
<comment type="subcellular location">
    <subcellularLocation>
        <location evidence="3 4">Cytoplasm</location>
        <location evidence="3 4">Cytoskeleton</location>
        <location evidence="3 4">Microtubule organizing center</location>
        <location evidence="3 4">Spindle pole body</location>
    </subcellularLocation>
    <subcellularLocation>
        <location evidence="3">Nucleus</location>
    </subcellularLocation>
    <subcellularLocation>
        <location evidence="5">Cytoplasm</location>
        <location evidence="5">Cytoskeleton</location>
    </subcellularLocation>
</comment>
<comment type="disruption phenotype">
    <text evidence="7">Short metaphase spindles with splayed microtubules increasing spindle width.</text>
</comment>
<keyword id="KW-0002">3D-structure</keyword>
<keyword id="KW-0175">Coiled coil</keyword>
<keyword id="KW-0963">Cytoplasm</keyword>
<keyword id="KW-0206">Cytoskeleton</keyword>
<keyword id="KW-0539">Nucleus</keyword>
<keyword id="KW-1185">Reference proteome</keyword>
<organism>
    <name type="scientific">Saccharomyces cerevisiae (strain ATCC 204508 / S288c)</name>
    <name type="common">Baker's yeast</name>
    <dbReference type="NCBI Taxonomy" id="559292"/>
    <lineage>
        <taxon>Eukaryota</taxon>
        <taxon>Fungi</taxon>
        <taxon>Dikarya</taxon>
        <taxon>Ascomycota</taxon>
        <taxon>Saccharomycotina</taxon>
        <taxon>Saccharomycetes</taxon>
        <taxon>Saccharomycetales</taxon>
        <taxon>Saccharomycetaceae</taxon>
        <taxon>Saccharomyces</taxon>
    </lineage>
</organism>
<proteinExistence type="evidence at protein level"/>
<reference key="1">
    <citation type="journal article" date="1997" name="Nature">
        <title>The nucleotide sequence of Saccharomyces cerevisiae chromosome XVI.</title>
        <authorList>
            <person name="Bussey H."/>
            <person name="Storms R.K."/>
            <person name="Ahmed A."/>
            <person name="Albermann K."/>
            <person name="Allen E."/>
            <person name="Ansorge W."/>
            <person name="Araujo R."/>
            <person name="Aparicio A."/>
            <person name="Barrell B.G."/>
            <person name="Badcock K."/>
            <person name="Benes V."/>
            <person name="Botstein D."/>
            <person name="Bowman S."/>
            <person name="Brueckner M."/>
            <person name="Carpenter J."/>
            <person name="Cherry J.M."/>
            <person name="Chung E."/>
            <person name="Churcher C.M."/>
            <person name="Coster F."/>
            <person name="Davis K."/>
            <person name="Davis R.W."/>
            <person name="Dietrich F.S."/>
            <person name="Delius H."/>
            <person name="DiPaolo T."/>
            <person name="Dubois E."/>
            <person name="Duesterhoeft A."/>
            <person name="Duncan M."/>
            <person name="Floeth M."/>
            <person name="Fortin N."/>
            <person name="Friesen J.D."/>
            <person name="Fritz C."/>
            <person name="Goffeau A."/>
            <person name="Hall J."/>
            <person name="Hebling U."/>
            <person name="Heumann K."/>
            <person name="Hilbert H."/>
            <person name="Hillier L.W."/>
            <person name="Hunicke-Smith S."/>
            <person name="Hyman R.W."/>
            <person name="Johnston M."/>
            <person name="Kalman S."/>
            <person name="Kleine K."/>
            <person name="Komp C."/>
            <person name="Kurdi O."/>
            <person name="Lashkari D."/>
            <person name="Lew H."/>
            <person name="Lin A."/>
            <person name="Lin D."/>
            <person name="Louis E.J."/>
            <person name="Marathe R."/>
            <person name="Messenguy F."/>
            <person name="Mewes H.-W."/>
            <person name="Mirtipati S."/>
            <person name="Moestl D."/>
            <person name="Mueller-Auer S."/>
            <person name="Namath A."/>
            <person name="Nentwich U."/>
            <person name="Oefner P."/>
            <person name="Pearson D."/>
            <person name="Petel F.X."/>
            <person name="Pohl T.M."/>
            <person name="Purnelle B."/>
            <person name="Rajandream M.A."/>
            <person name="Rechmann S."/>
            <person name="Rieger M."/>
            <person name="Riles L."/>
            <person name="Roberts D."/>
            <person name="Schaefer M."/>
            <person name="Scharfe M."/>
            <person name="Scherens B."/>
            <person name="Schramm S."/>
            <person name="Schroeder M."/>
            <person name="Sdicu A.-M."/>
            <person name="Tettelin H."/>
            <person name="Urrestarazu L.A."/>
            <person name="Ushinsky S."/>
            <person name="Vierendeels F."/>
            <person name="Vissers S."/>
            <person name="Voss H."/>
            <person name="Walsh S.V."/>
            <person name="Wambutt R."/>
            <person name="Wang Y."/>
            <person name="Wedler E."/>
            <person name="Wedler H."/>
            <person name="Winnett E."/>
            <person name="Zhong W.-W."/>
            <person name="Zollner A."/>
            <person name="Vo D.H."/>
            <person name="Hani J."/>
        </authorList>
    </citation>
    <scope>NUCLEOTIDE SEQUENCE [LARGE SCALE GENOMIC DNA]</scope>
    <source>
        <strain>ATCC 204508 / S288c</strain>
    </source>
</reference>
<reference key="2">
    <citation type="journal article" date="2014" name="G3 (Bethesda)">
        <title>The reference genome sequence of Saccharomyces cerevisiae: Then and now.</title>
        <authorList>
            <person name="Engel S.R."/>
            <person name="Dietrich F.S."/>
            <person name="Fisk D.G."/>
            <person name="Binkley G."/>
            <person name="Balakrishnan R."/>
            <person name="Costanzo M.C."/>
            <person name="Dwight S.S."/>
            <person name="Hitz B.C."/>
            <person name="Karra K."/>
            <person name="Nash R.S."/>
            <person name="Weng S."/>
            <person name="Wong E.D."/>
            <person name="Lloyd P."/>
            <person name="Skrzypek M.S."/>
            <person name="Miyasato S.R."/>
            <person name="Simison M."/>
            <person name="Cherry J.M."/>
        </authorList>
    </citation>
    <scope>GENOME REANNOTATION</scope>
    <source>
        <strain>ATCC 204508 / S288c</strain>
    </source>
</reference>
<reference key="3">
    <citation type="journal article" date="1999" name="J. Cell Biol.">
        <title>Differential regulation of the Kar3p kinesin-related protein by two associated proteins, Cik1p and Vik1p.</title>
        <authorList>
            <person name="Manning B.D."/>
            <person name="Barrett J.G."/>
            <person name="Wallace J.A."/>
            <person name="Granok H."/>
            <person name="Snyder M."/>
        </authorList>
    </citation>
    <scope>FUNCTION</scope>
    <scope>INTERACTION WITH KAR3</scope>
    <scope>SUBCELLULAR LOCATION</scope>
</reference>
<reference key="4">
    <citation type="journal article" date="2001" name="Genetics">
        <title>The Kar3-interacting protein Cik1p plays a critical role in passage through meiosis I in Saccharomyces cerevisiae.</title>
        <authorList>
            <person name="Shanks R.M.Q."/>
            <person name="Kamieniecki R.J."/>
            <person name="Dawson D.S."/>
        </authorList>
    </citation>
    <scope>FUNCTION</scope>
    <scope>SUBCELLULAR LOCATION</scope>
</reference>
<reference key="5">
    <citation type="journal article" date="2014" name="Dev. Cell">
        <title>Minus-end-directed Kinesin-14 motors align antiparallel microtubules to control metaphase spindle length.</title>
        <authorList>
            <person name="Hepperla A.J."/>
            <person name="Willey P.T."/>
            <person name="Coombes C.E."/>
            <person name="Schuster B.M."/>
            <person name="Gerami-Nejad M."/>
            <person name="McClellan M."/>
            <person name="Mukherjee S."/>
            <person name="Fox J."/>
            <person name="Winey M."/>
            <person name="Odde D.J."/>
            <person name="O'Toole E."/>
            <person name="Gardner M.K."/>
        </authorList>
    </citation>
    <scope>FUNCTION</scope>
    <scope>DISRUPTION PHENOTYPE</scope>
</reference>
<reference evidence="8" key="6">
    <citation type="journal article" date="2007" name="Cell">
        <title>Vik1 modulates microtubule-Kar3 interactions through a motor domain that lacks an active site.</title>
        <authorList>
            <person name="Allingham J.S."/>
            <person name="Sproul L.R."/>
            <person name="Rayment I."/>
            <person name="Gilbert S.P."/>
        </authorList>
    </citation>
    <scope>X-RAY CRYSTALLOGRAPHY (1.60 ANGSTROMS) OF 353-647</scope>
    <scope>FUNCTION</scope>
    <scope>INTERACTION WITH KAR3</scope>
    <scope>SUBCELLULAR LOCATION</scope>
</reference>
<reference evidence="9" key="7">
    <citation type="journal article" date="2012" name="J. Cell Biol.">
        <title>Kar3Vik1, a member of the kinesin-14 superfamily, shows a novel kinesin microtubule binding pattern.</title>
        <authorList>
            <person name="Rank K.C."/>
            <person name="Chen C.J."/>
            <person name="Cope J."/>
            <person name="Porche K."/>
            <person name="Hoenger A."/>
            <person name="Gilbert S.P."/>
            <person name="Rayment I."/>
        </authorList>
    </citation>
    <scope>X-RAY CRYSTALLOGRAPHY (2.30 ANGSTROMS) OF 324-647 IN COMPLEX WITH KAR3</scope>
    <scope>FUNCTION</scope>
</reference>
<protein>
    <recommendedName>
        <fullName>Spindle pole body-associated protein VIK1</fullName>
    </recommendedName>
    <alternativeName>
        <fullName>Vegetative interaction with KAR3 protein 1</fullName>
    </alternativeName>
</protein>
<dbReference type="EMBL" id="Z73609">
    <property type="protein sequence ID" value="CAA97978.1"/>
    <property type="molecule type" value="Genomic_DNA"/>
</dbReference>
<dbReference type="EMBL" id="Z67751">
    <property type="protein sequence ID" value="CAA91591.1"/>
    <property type="molecule type" value="Genomic_DNA"/>
</dbReference>
<dbReference type="EMBL" id="Z73608">
    <property type="protein sequence ID" value="CAA97977.1"/>
    <property type="molecule type" value="Genomic_DNA"/>
</dbReference>
<dbReference type="EMBL" id="BK006949">
    <property type="protein sequence ID" value="DAA11184.1"/>
    <property type="molecule type" value="Genomic_DNA"/>
</dbReference>
<dbReference type="PIR" id="S61011">
    <property type="entry name" value="S61011"/>
</dbReference>
<dbReference type="RefSeq" id="NP_015070.1">
    <property type="nucleotide sequence ID" value="NM_001184067.1"/>
</dbReference>
<dbReference type="PDB" id="2O0A">
    <property type="method" value="X-ray"/>
    <property type="resolution" value="1.60 A"/>
    <property type="chains" value="A=353-647"/>
</dbReference>
<dbReference type="PDB" id="4ETP">
    <property type="method" value="X-ray"/>
    <property type="resolution" value="2.30 A"/>
    <property type="chains" value="B=341-647"/>
</dbReference>
<dbReference type="PDBsum" id="2O0A"/>
<dbReference type="PDBsum" id="4ETP"/>
<dbReference type="SMR" id="Q12045"/>
<dbReference type="BioGRID" id="35910">
    <property type="interactions" value="116"/>
</dbReference>
<dbReference type="DIP" id="DIP-2397N"/>
<dbReference type="FunCoup" id="Q12045">
    <property type="interactions" value="198"/>
</dbReference>
<dbReference type="IntAct" id="Q12045">
    <property type="interactions" value="4"/>
</dbReference>
<dbReference type="MINT" id="Q12045"/>
<dbReference type="STRING" id="4932.YPL253C"/>
<dbReference type="iPTMnet" id="Q12045"/>
<dbReference type="PaxDb" id="4932-YPL253C"/>
<dbReference type="PeptideAtlas" id="Q12045"/>
<dbReference type="EnsemblFungi" id="YPL253C_mRNA">
    <property type="protein sequence ID" value="YPL253C"/>
    <property type="gene ID" value="YPL253C"/>
</dbReference>
<dbReference type="GeneID" id="855822"/>
<dbReference type="KEGG" id="sce:YPL253C"/>
<dbReference type="AGR" id="SGD:S000006174"/>
<dbReference type="SGD" id="S000006174">
    <property type="gene designation" value="VIK1"/>
</dbReference>
<dbReference type="VEuPathDB" id="FungiDB:YPL253C"/>
<dbReference type="eggNOG" id="ENOG502RIY9">
    <property type="taxonomic scope" value="Eukaryota"/>
</dbReference>
<dbReference type="GeneTree" id="ENSGT00940000176415"/>
<dbReference type="HOGENOM" id="CLU_025801_0_0_1"/>
<dbReference type="InParanoid" id="Q12045"/>
<dbReference type="OMA" id="EYQCYHD"/>
<dbReference type="OrthoDB" id="4067584at2759"/>
<dbReference type="BioCyc" id="YEAST:G3O-34138-MONOMER"/>
<dbReference type="BioGRID-ORCS" id="855822">
    <property type="hits" value="0 hits in 10 CRISPR screens"/>
</dbReference>
<dbReference type="CD-CODE" id="876000F7">
    <property type="entry name" value="Centrosome"/>
</dbReference>
<dbReference type="EvolutionaryTrace" id="Q12045"/>
<dbReference type="PRO" id="PR:Q12045"/>
<dbReference type="Proteomes" id="UP000002311">
    <property type="component" value="Chromosome XVI"/>
</dbReference>
<dbReference type="RNAct" id="Q12045">
    <property type="molecule type" value="protein"/>
</dbReference>
<dbReference type="GO" id="GO:0005737">
    <property type="term" value="C:cytoplasm"/>
    <property type="evidence" value="ECO:0007669"/>
    <property type="project" value="UniProtKB-KW"/>
</dbReference>
<dbReference type="GO" id="GO:0005871">
    <property type="term" value="C:kinesin complex"/>
    <property type="evidence" value="ECO:0000314"/>
    <property type="project" value="SGD"/>
</dbReference>
<dbReference type="GO" id="GO:0005634">
    <property type="term" value="C:nucleus"/>
    <property type="evidence" value="ECO:0007669"/>
    <property type="project" value="UniProtKB-SubCell"/>
</dbReference>
<dbReference type="GO" id="GO:0005816">
    <property type="term" value="C:spindle pole body"/>
    <property type="evidence" value="ECO:0000314"/>
    <property type="project" value="SGD"/>
</dbReference>
<dbReference type="GO" id="GO:0008093">
    <property type="term" value="F:cytoskeletal anchor activity"/>
    <property type="evidence" value="ECO:0000314"/>
    <property type="project" value="UniProtKB"/>
</dbReference>
<dbReference type="GO" id="GO:0008017">
    <property type="term" value="F:microtubule binding"/>
    <property type="evidence" value="ECO:0000314"/>
    <property type="project" value="UniProtKB"/>
</dbReference>
<dbReference type="GO" id="GO:0036503">
    <property type="term" value="P:ERAD pathway"/>
    <property type="evidence" value="ECO:0000315"/>
    <property type="project" value="SGD"/>
</dbReference>
<dbReference type="GO" id="GO:0007020">
    <property type="term" value="P:microtubule nucleation"/>
    <property type="evidence" value="ECO:0000315"/>
    <property type="project" value="SGD"/>
</dbReference>
<dbReference type="GO" id="GO:0007017">
    <property type="term" value="P:microtubule-based process"/>
    <property type="evidence" value="ECO:0000315"/>
    <property type="project" value="SGD"/>
</dbReference>
<dbReference type="GO" id="GO:0007064">
    <property type="term" value="P:mitotic sister chromatid cohesion"/>
    <property type="evidence" value="ECO:0000315"/>
    <property type="project" value="SGD"/>
</dbReference>
<dbReference type="Gene3D" id="3.40.850.20">
    <property type="match status" value="1"/>
</dbReference>
<dbReference type="InterPro" id="IPR031852">
    <property type="entry name" value="Vik1/Cik1_MT-bd"/>
</dbReference>
<dbReference type="Pfam" id="PF16796">
    <property type="entry name" value="Microtub_bd"/>
    <property type="match status" value="1"/>
</dbReference>
<feature type="chain" id="PRO_0000270929" description="Spindle pole body-associated protein VIK1">
    <location>
        <begin position="1"/>
        <end position="647"/>
    </location>
</feature>
<feature type="region of interest" description="Disordered" evidence="2">
    <location>
        <begin position="36"/>
        <end position="55"/>
    </location>
</feature>
<feature type="coiled-coil region" evidence="1">
    <location>
        <begin position="202"/>
        <end position="350"/>
    </location>
</feature>
<feature type="compositionally biased region" description="Polar residues" evidence="2">
    <location>
        <begin position="36"/>
        <end position="51"/>
    </location>
</feature>
<feature type="helix" evidence="10">
    <location>
        <begin position="353"/>
        <end position="372"/>
    </location>
</feature>
<feature type="strand" evidence="10">
    <location>
        <begin position="376"/>
        <end position="381"/>
    </location>
</feature>
<feature type="helix" evidence="10">
    <location>
        <begin position="383"/>
        <end position="385"/>
    </location>
</feature>
<feature type="strand" evidence="10">
    <location>
        <begin position="390"/>
        <end position="393"/>
    </location>
</feature>
<feature type="turn" evidence="10">
    <location>
        <begin position="394"/>
        <end position="397"/>
    </location>
</feature>
<feature type="strand" evidence="10">
    <location>
        <begin position="398"/>
        <end position="401"/>
    </location>
</feature>
<feature type="turn" evidence="10">
    <location>
        <begin position="402"/>
        <end position="404"/>
    </location>
</feature>
<feature type="strand" evidence="10">
    <location>
        <begin position="407"/>
        <end position="409"/>
    </location>
</feature>
<feature type="strand" evidence="10">
    <location>
        <begin position="411"/>
        <end position="415"/>
    </location>
</feature>
<feature type="turn" evidence="10">
    <location>
        <begin position="416"/>
        <end position="418"/>
    </location>
</feature>
<feature type="helix" evidence="10">
    <location>
        <begin position="421"/>
        <end position="427"/>
    </location>
</feature>
<feature type="helix" evidence="10">
    <location>
        <begin position="430"/>
        <end position="438"/>
    </location>
</feature>
<feature type="strand" evidence="10">
    <location>
        <begin position="443"/>
        <end position="448"/>
    </location>
</feature>
<feature type="helix" evidence="10">
    <location>
        <begin position="454"/>
        <end position="465"/>
    </location>
</feature>
<feature type="helix" evidence="10">
    <location>
        <begin position="470"/>
        <end position="474"/>
    </location>
</feature>
<feature type="strand" evidence="10">
    <location>
        <begin position="475"/>
        <end position="485"/>
    </location>
</feature>
<feature type="strand" evidence="11">
    <location>
        <begin position="486"/>
        <end position="488"/>
    </location>
</feature>
<feature type="strand" evidence="10">
    <location>
        <begin position="490"/>
        <end position="492"/>
    </location>
</feature>
<feature type="strand" evidence="10">
    <location>
        <begin position="506"/>
        <end position="509"/>
    </location>
</feature>
<feature type="strand" evidence="10">
    <location>
        <begin position="514"/>
        <end position="518"/>
    </location>
</feature>
<feature type="strand" evidence="10">
    <location>
        <begin position="521"/>
        <end position="525"/>
    </location>
</feature>
<feature type="helix" evidence="10">
    <location>
        <begin position="526"/>
        <end position="529"/>
    </location>
</feature>
<feature type="turn" evidence="10">
    <location>
        <begin position="532"/>
        <end position="535"/>
    </location>
</feature>
<feature type="strand" evidence="10">
    <location>
        <begin position="546"/>
        <end position="557"/>
    </location>
</feature>
<feature type="strand" evidence="10">
    <location>
        <begin position="570"/>
        <end position="577"/>
    </location>
</feature>
<feature type="helix" evidence="10">
    <location>
        <begin position="580"/>
        <end position="591"/>
    </location>
</feature>
<feature type="helix" evidence="10">
    <location>
        <begin position="599"/>
        <end position="610"/>
    </location>
</feature>
<feature type="strand" evidence="10">
    <location>
        <begin position="614"/>
        <end position="619"/>
    </location>
</feature>
<feature type="helix" evidence="10">
    <location>
        <begin position="622"/>
        <end position="624"/>
    </location>
</feature>
<feature type="helix" evidence="10">
    <location>
        <begin position="625"/>
        <end position="638"/>
    </location>
</feature>